<comment type="function">
    <text evidence="1">Excises uracil residues from the DNA which can arise as a result of misincorporation of dUMP residues by DNA polymerase or deamination of cytosines. Therefore may reduce deleterious uracil incorporation into the viral genome, particularly in terminally differentiated cells which lack DNA repair enzymes.</text>
</comment>
<comment type="catalytic activity">
    <reaction evidence="1">
        <text>Hydrolyzes single-stranded DNA or mismatched double-stranded DNA and polynucleotides, releasing free uracil.</text>
        <dbReference type="EC" id="3.2.2.27"/>
    </reaction>
</comment>
<comment type="subcellular location">
    <subcellularLocation>
        <location evidence="1">Host nucleus</location>
    </subcellularLocation>
</comment>
<comment type="similarity">
    <text evidence="1">Belongs to the uracil-DNA glycosylase (UDG) superfamily. UNG family.</text>
</comment>
<keyword id="KW-0227">DNA damage</keyword>
<keyword id="KW-0234">DNA repair</keyword>
<keyword id="KW-1048">Host nucleus</keyword>
<keyword id="KW-0378">Hydrolase</keyword>
<proteinExistence type="evidence at transcript level"/>
<organism>
    <name type="scientific">Human herpesvirus 2 (strain 333)</name>
    <name type="common">HHV-2</name>
    <name type="synonym">Human herpes simplex virus 2</name>
    <dbReference type="NCBI Taxonomy" id="10313"/>
    <lineage>
        <taxon>Viruses</taxon>
        <taxon>Duplodnaviria</taxon>
        <taxon>Heunggongvirae</taxon>
        <taxon>Peploviricota</taxon>
        <taxon>Herviviricetes</taxon>
        <taxon>Herpesvirales</taxon>
        <taxon>Orthoherpesviridae</taxon>
        <taxon>Alphaherpesvirinae</taxon>
        <taxon>Simplexvirus</taxon>
        <taxon>Simplexvirus humanalpha2</taxon>
        <taxon>Human herpesvirus 2</taxon>
    </lineage>
</organism>
<evidence type="ECO:0000255" key="1">
    <source>
        <dbReference type="HAMAP-Rule" id="MF_04046"/>
    </source>
</evidence>
<sequence>MAMKRNPSRVFCAYSKNGTHRSAAPTTHRCIAGGGRGALDAGAENTQGHPESRCFPGGRPPQTGPSWCLGAAFRRAFLIDDAWRPLLEPELANPLTARLLAEYDRRCQTEEVLPPREDVFSWTRYCTPDDVRVVIIGQDPYHHPGQAHGLAFSVRADVPVPPSLRNVLAAVKNCYPDARMSGRGCLEKWARDGVLLLNTTLTVKRGAAASTSKLGWDRFVGGVVRRLAARRPGLVFMLWGAHAQNAIRPDPRQHYVLKFSHPSPLSKVPFGTCQHFLAANRYLETRDIMPITVV</sequence>
<name>UNG_HHV23</name>
<accession>P13158</accession>
<reference key="1">
    <citation type="journal article" date="1988" name="J. Virol.">
        <title>Identification of the coding sequence for herpes simplex virus uracil-DNA glycosylase.</title>
        <authorList>
            <person name="Worrad D.M."/>
            <person name="Caradonna S."/>
        </authorList>
    </citation>
    <scope>NUCLEOTIDE SEQUENCE [MRNA]</scope>
</reference>
<dbReference type="EC" id="3.2.2.27" evidence="1"/>
<dbReference type="EMBL" id="M25410">
    <property type="protein sequence ID" value="AAA45859.1"/>
    <property type="status" value="ALT_SEQ"/>
    <property type="molecule type" value="mRNA"/>
</dbReference>
<dbReference type="PIR" id="A31885">
    <property type="entry name" value="DGBEH2"/>
</dbReference>
<dbReference type="SMR" id="P13158"/>
<dbReference type="GO" id="GO:0042025">
    <property type="term" value="C:host cell nucleus"/>
    <property type="evidence" value="ECO:0007669"/>
    <property type="project" value="UniProtKB-SubCell"/>
</dbReference>
<dbReference type="GO" id="GO:0004844">
    <property type="term" value="F:uracil DNA N-glycosylase activity"/>
    <property type="evidence" value="ECO:0007669"/>
    <property type="project" value="UniProtKB-EC"/>
</dbReference>
<dbReference type="GO" id="GO:0097510">
    <property type="term" value="P:base-excision repair, AP site formation via deaminated base removal"/>
    <property type="evidence" value="ECO:0007669"/>
    <property type="project" value="TreeGrafter"/>
</dbReference>
<dbReference type="CDD" id="cd10027">
    <property type="entry name" value="UDG-F1-like"/>
    <property type="match status" value="1"/>
</dbReference>
<dbReference type="Gene3D" id="3.40.470.10">
    <property type="entry name" value="Uracil-DNA glycosylase-like domain"/>
    <property type="match status" value="1"/>
</dbReference>
<dbReference type="HAMAP" id="MF_00148">
    <property type="entry name" value="UDG"/>
    <property type="match status" value="1"/>
</dbReference>
<dbReference type="InterPro" id="IPR002043">
    <property type="entry name" value="UDG_fam1"/>
</dbReference>
<dbReference type="InterPro" id="IPR018085">
    <property type="entry name" value="Ura-DNA_Glyclase_AS"/>
</dbReference>
<dbReference type="InterPro" id="IPR005122">
    <property type="entry name" value="Uracil-DNA_glycosylase-like"/>
</dbReference>
<dbReference type="InterPro" id="IPR036895">
    <property type="entry name" value="Uracil-DNA_glycosylase-like_sf"/>
</dbReference>
<dbReference type="NCBIfam" id="NF003592">
    <property type="entry name" value="PRK05254.1-5"/>
    <property type="match status" value="1"/>
</dbReference>
<dbReference type="NCBIfam" id="TIGR00628">
    <property type="entry name" value="ung"/>
    <property type="match status" value="1"/>
</dbReference>
<dbReference type="PANTHER" id="PTHR11264">
    <property type="entry name" value="URACIL-DNA GLYCOSYLASE"/>
    <property type="match status" value="1"/>
</dbReference>
<dbReference type="PANTHER" id="PTHR11264:SF0">
    <property type="entry name" value="URACIL-DNA GLYCOSYLASE"/>
    <property type="match status" value="1"/>
</dbReference>
<dbReference type="Pfam" id="PF03167">
    <property type="entry name" value="UDG"/>
    <property type="match status" value="1"/>
</dbReference>
<dbReference type="SMART" id="SM00986">
    <property type="entry name" value="UDG"/>
    <property type="match status" value="1"/>
</dbReference>
<dbReference type="SMART" id="SM00987">
    <property type="entry name" value="UreE_C"/>
    <property type="match status" value="1"/>
</dbReference>
<dbReference type="SUPFAM" id="SSF52141">
    <property type="entry name" value="Uracil-DNA glycosylase-like"/>
    <property type="match status" value="1"/>
</dbReference>
<dbReference type="PROSITE" id="PS00130">
    <property type="entry name" value="U_DNA_GLYCOSYLASE"/>
    <property type="match status" value="1"/>
</dbReference>
<gene>
    <name type="primary">UL2</name>
</gene>
<protein>
    <recommendedName>
        <fullName evidence="1">Uracil-DNA glycosylase</fullName>
        <shortName evidence="1">UDG</shortName>
        <ecNumber evidence="1">3.2.2.27</ecNumber>
    </recommendedName>
    <alternativeName>
        <fullName evidence="1">UNG</fullName>
    </alternativeName>
</protein>
<organismHost>
    <name type="scientific">Homo sapiens</name>
    <name type="common">Human</name>
    <dbReference type="NCBI Taxonomy" id="9606"/>
</organismHost>
<feature type="chain" id="PRO_0000176186" description="Uracil-DNA glycosylase">
    <location>
        <begin position="1"/>
        <end position="294"/>
    </location>
</feature>
<feature type="active site" description="Proton acceptor" evidence="1">
    <location>
        <position position="139"/>
    </location>
</feature>